<keyword id="KW-0072">Autophagy</keyword>
<keyword id="KW-0968">Cytoplasmic vesicle</keyword>
<keyword id="KW-0449">Lipoprotein</keyword>
<keyword id="KW-0472">Membrane</keyword>
<keyword id="KW-0653">Protein transport</keyword>
<keyword id="KW-1185">Reference proteome</keyword>
<keyword id="KW-0813">Transport</keyword>
<keyword id="KW-0833">Ubl conjugation pathway</keyword>
<keyword id="KW-0926">Vacuole</keyword>
<proteinExistence type="inferred from homology"/>
<organism>
    <name type="scientific">Neurospora crassa (strain ATCC 24698 / 74-OR23-1A / CBS 708.71 / DSM 1257 / FGSC 987)</name>
    <dbReference type="NCBI Taxonomy" id="367110"/>
    <lineage>
        <taxon>Eukaryota</taxon>
        <taxon>Fungi</taxon>
        <taxon>Dikarya</taxon>
        <taxon>Ascomycota</taxon>
        <taxon>Pezizomycotina</taxon>
        <taxon>Sordariomycetes</taxon>
        <taxon>Sordariomycetidae</taxon>
        <taxon>Sordariales</taxon>
        <taxon>Sordariaceae</taxon>
        <taxon>Neurospora</taxon>
    </lineage>
</organism>
<evidence type="ECO:0000250" key="1">
    <source>
        <dbReference type="UniProtKB" id="P38182"/>
    </source>
</evidence>
<evidence type="ECO:0000305" key="2"/>
<gene>
    <name type="primary">apg-6</name>
    <name type="synonym">atg8</name>
    <name type="ORF">B24G3.150</name>
    <name type="ORF">NCU01545</name>
</gene>
<reference key="1">
    <citation type="journal article" date="2003" name="Nucleic Acids Res.">
        <title>What's in the genome of a filamentous fungus? Analysis of the Neurospora genome sequence.</title>
        <authorList>
            <person name="Mannhaupt G."/>
            <person name="Montrone C."/>
            <person name="Haase D."/>
            <person name="Mewes H.-W."/>
            <person name="Aign V."/>
            <person name="Hoheisel J.D."/>
            <person name="Fartmann B."/>
            <person name="Nyakatura G."/>
            <person name="Kempken F."/>
            <person name="Maier J."/>
            <person name="Schulte U."/>
        </authorList>
    </citation>
    <scope>NUCLEOTIDE SEQUENCE [LARGE SCALE GENOMIC DNA]</scope>
    <source>
        <strain>ATCC 24698 / 74-OR23-1A / CBS 708.71 / DSM 1257 / FGSC 987</strain>
    </source>
</reference>
<reference key="2">
    <citation type="journal article" date="2003" name="Nature">
        <title>The genome sequence of the filamentous fungus Neurospora crassa.</title>
        <authorList>
            <person name="Galagan J.E."/>
            <person name="Calvo S.E."/>
            <person name="Borkovich K.A."/>
            <person name="Selker E.U."/>
            <person name="Read N.D."/>
            <person name="Jaffe D.B."/>
            <person name="FitzHugh W."/>
            <person name="Ma L.-J."/>
            <person name="Smirnov S."/>
            <person name="Purcell S."/>
            <person name="Rehman B."/>
            <person name="Elkins T."/>
            <person name="Engels R."/>
            <person name="Wang S."/>
            <person name="Nielsen C.B."/>
            <person name="Butler J."/>
            <person name="Endrizzi M."/>
            <person name="Qui D."/>
            <person name="Ianakiev P."/>
            <person name="Bell-Pedersen D."/>
            <person name="Nelson M.A."/>
            <person name="Werner-Washburne M."/>
            <person name="Selitrennikoff C.P."/>
            <person name="Kinsey J.A."/>
            <person name="Braun E.L."/>
            <person name="Zelter A."/>
            <person name="Schulte U."/>
            <person name="Kothe G.O."/>
            <person name="Jedd G."/>
            <person name="Mewes H.-W."/>
            <person name="Staben C."/>
            <person name="Marcotte E."/>
            <person name="Greenberg D."/>
            <person name="Roy A."/>
            <person name="Foley K."/>
            <person name="Naylor J."/>
            <person name="Stange-Thomann N."/>
            <person name="Barrett R."/>
            <person name="Gnerre S."/>
            <person name="Kamal M."/>
            <person name="Kamvysselis M."/>
            <person name="Mauceli E.W."/>
            <person name="Bielke C."/>
            <person name="Rudd S."/>
            <person name="Frishman D."/>
            <person name="Krystofova S."/>
            <person name="Rasmussen C."/>
            <person name="Metzenberg R.L."/>
            <person name="Perkins D.D."/>
            <person name="Kroken S."/>
            <person name="Cogoni C."/>
            <person name="Macino G."/>
            <person name="Catcheside D.E.A."/>
            <person name="Li W."/>
            <person name="Pratt R.J."/>
            <person name="Osmani S.A."/>
            <person name="DeSouza C.P.C."/>
            <person name="Glass N.L."/>
            <person name="Orbach M.J."/>
            <person name="Berglund J.A."/>
            <person name="Voelker R."/>
            <person name="Yarden O."/>
            <person name="Plamann M."/>
            <person name="Seiler S."/>
            <person name="Dunlap J.C."/>
            <person name="Radford A."/>
            <person name="Aramayo R."/>
            <person name="Natvig D.O."/>
            <person name="Alex L.A."/>
            <person name="Mannhaupt G."/>
            <person name="Ebbole D.J."/>
            <person name="Freitag M."/>
            <person name="Paulsen I."/>
            <person name="Sachs M.S."/>
            <person name="Lander E.S."/>
            <person name="Nusbaum C."/>
            <person name="Birren B.W."/>
        </authorList>
    </citation>
    <scope>NUCLEOTIDE SEQUENCE [LARGE SCALE GENOMIC DNA]</scope>
    <source>
        <strain>ATCC 24698 / 74-OR23-1A / CBS 708.71 / DSM 1257 / FGSC 987</strain>
    </source>
</reference>
<sequence>MRSKFKDEHPFEKRKAEAERIRQKYSDRIPVICEKVEKSDIATIDKKKYLVPADLTVGQFVYVIRKRIKLSPEKAIFIFVDEVLPPTAALMSSIYEEHKDEDGFLYITYSGENTFGDFETA</sequence>
<feature type="chain" id="PRO_0000017226" description="Autophagy-related protein 8">
    <location>
        <begin position="1"/>
        <end position="116"/>
    </location>
</feature>
<feature type="propeptide" id="PRO_0000017227" description="Removed in mature form" evidence="1">
    <location>
        <begin position="117"/>
        <end position="121"/>
    </location>
</feature>
<feature type="site" description="Cleavage; by cpr-1/atg4" evidence="1">
    <location>
        <begin position="116"/>
        <end position="117"/>
    </location>
</feature>
<feature type="lipid moiety-binding region" description="Phosphatidylethanolamine amidated glycine" evidence="1">
    <location>
        <position position="116"/>
    </location>
</feature>
<dbReference type="EMBL" id="AL670002">
    <property type="protein sequence ID" value="CAD21230.1"/>
    <property type="molecule type" value="Genomic_DNA"/>
</dbReference>
<dbReference type="EMBL" id="CM002237">
    <property type="protein sequence ID" value="EAA27012.1"/>
    <property type="molecule type" value="Genomic_DNA"/>
</dbReference>
<dbReference type="SMR" id="Q8WZY7"/>
<dbReference type="FunCoup" id="Q8WZY7">
    <property type="interactions" value="523"/>
</dbReference>
<dbReference type="STRING" id="367110.Q8WZY7"/>
<dbReference type="PaxDb" id="5141-EFNCRP00000001746"/>
<dbReference type="EnsemblFungi" id="EAA27012">
    <property type="protein sequence ID" value="EAA27012"/>
    <property type="gene ID" value="NCU01545"/>
</dbReference>
<dbReference type="KEGG" id="ncr:NCU01545"/>
<dbReference type="VEuPathDB" id="FungiDB:NCU01545"/>
<dbReference type="HOGENOM" id="CLU_119276_0_1_1"/>
<dbReference type="InParanoid" id="Q8WZY7"/>
<dbReference type="OrthoDB" id="6738456at2759"/>
<dbReference type="Proteomes" id="UP000001805">
    <property type="component" value="Chromosome 6, Linkage Group II"/>
</dbReference>
<dbReference type="GO" id="GO:0000421">
    <property type="term" value="C:autophagosome membrane"/>
    <property type="evidence" value="ECO:0000318"/>
    <property type="project" value="GO_Central"/>
</dbReference>
<dbReference type="GO" id="GO:0031410">
    <property type="term" value="C:cytoplasmic vesicle"/>
    <property type="evidence" value="ECO:0007669"/>
    <property type="project" value="UniProtKB-KW"/>
</dbReference>
<dbReference type="GO" id="GO:0000329">
    <property type="term" value="C:fungal-type vacuole membrane"/>
    <property type="evidence" value="ECO:0000318"/>
    <property type="project" value="GO_Central"/>
</dbReference>
<dbReference type="GO" id="GO:0008429">
    <property type="term" value="F:phosphatidylethanolamine binding"/>
    <property type="evidence" value="ECO:0000318"/>
    <property type="project" value="GO_Central"/>
</dbReference>
<dbReference type="GO" id="GO:0000045">
    <property type="term" value="P:autophagosome assembly"/>
    <property type="evidence" value="ECO:0000318"/>
    <property type="project" value="GO_Central"/>
</dbReference>
<dbReference type="GO" id="GO:0097352">
    <property type="term" value="P:autophagosome maturation"/>
    <property type="evidence" value="ECO:0000318"/>
    <property type="project" value="GO_Central"/>
</dbReference>
<dbReference type="GO" id="GO:0006995">
    <property type="term" value="P:cellular response to nitrogen starvation"/>
    <property type="evidence" value="ECO:0000318"/>
    <property type="project" value="GO_Central"/>
</dbReference>
<dbReference type="GO" id="GO:0000423">
    <property type="term" value="P:mitophagy"/>
    <property type="evidence" value="ECO:0000318"/>
    <property type="project" value="GO_Central"/>
</dbReference>
<dbReference type="GO" id="GO:0015031">
    <property type="term" value="P:protein transport"/>
    <property type="evidence" value="ECO:0007669"/>
    <property type="project" value="UniProtKB-KW"/>
</dbReference>
<dbReference type="CDD" id="cd16128">
    <property type="entry name" value="Ubl_ATG8"/>
    <property type="match status" value="1"/>
</dbReference>
<dbReference type="FunFam" id="3.10.20.90:FF:000010">
    <property type="entry name" value="Autophagy-related protein"/>
    <property type="match status" value="1"/>
</dbReference>
<dbReference type="Gene3D" id="3.10.20.90">
    <property type="entry name" value="Phosphatidylinositol 3-kinase Catalytic Subunit, Chain A, domain 1"/>
    <property type="match status" value="1"/>
</dbReference>
<dbReference type="InterPro" id="IPR004241">
    <property type="entry name" value="Atg8-like"/>
</dbReference>
<dbReference type="InterPro" id="IPR029071">
    <property type="entry name" value="Ubiquitin-like_domsf"/>
</dbReference>
<dbReference type="PANTHER" id="PTHR10969">
    <property type="entry name" value="MICROTUBULE-ASSOCIATED PROTEINS 1A/1B LIGHT CHAIN 3-RELATED"/>
    <property type="match status" value="1"/>
</dbReference>
<dbReference type="Pfam" id="PF02991">
    <property type="entry name" value="ATG8"/>
    <property type="match status" value="1"/>
</dbReference>
<dbReference type="SUPFAM" id="SSF54236">
    <property type="entry name" value="Ubiquitin-like"/>
    <property type="match status" value="1"/>
</dbReference>
<name>ATG8_NEUCR</name>
<comment type="function">
    <text evidence="1">Ubiquitin-like modifier involved in autophagosome formation. With cpr-1/atg4, mediates the delivery of the autophagosomes to the vacuole via the microtubule cytoskeleton. Required for selective autophagic degradation of the nucleus (nucleophagy) as well as for mitophagy which contributes to regulate mitochondrial quantity and quality by eliminating the mitochondria to a basal level to fulfill cellular energy requirements and preventing excess ROS production. Also participates in membrane fusion events that take place in the early secretory pathway. Also involved in endoplasmic reticulum-specific autophagic process and is essential for the survival of cells subjected to severe ER stress. The apg-6/atg8-PE conjugate mediates tethering between adjacent membranes and stimulates membrane hemifusion, leading to expansion of the autophagosomal membrane during autophagy.</text>
</comment>
<comment type="subcellular location">
    <subcellularLocation>
        <location evidence="1">Cytoplasmic vesicle</location>
        <location evidence="1">Autophagosome membrane</location>
        <topology evidence="1">Lipid-anchor</topology>
    </subcellularLocation>
    <subcellularLocation>
        <location evidence="1">Vacuole membrane</location>
        <topology evidence="1">Lipid-anchor</topology>
    </subcellularLocation>
</comment>
<comment type="PTM">
    <text evidence="1">The C-terminal 5 residues are removed to expose Gly-116 at the C-terminus. The C-terminal Gly is then amidated with phosphatidylethanolamine by an activating system similar to that for ubiquitin.</text>
</comment>
<comment type="similarity">
    <text evidence="2">Belongs to the ATG8 family.</text>
</comment>
<accession>Q8WZY7</accession>
<accession>Q1K4Y7</accession>
<protein>
    <recommendedName>
        <fullName>Autophagy-related protein 8</fullName>
    </recommendedName>
    <alternativeName>
        <fullName>Autophagy-related ubiquitin-like modifier atg8</fullName>
    </alternativeName>
</protein>